<feature type="chain" id="PRO_0000118779" description="NADH-quinone oxidoreductase subunit B">
    <location>
        <begin position="1"/>
        <end position="174"/>
    </location>
</feature>
<feature type="binding site" evidence="2">
    <location>
        <position position="47"/>
    </location>
    <ligand>
        <name>[4Fe-4S] cluster</name>
        <dbReference type="ChEBI" id="CHEBI:49883"/>
    </ligand>
</feature>
<feature type="binding site" evidence="2">
    <location>
        <position position="48"/>
    </location>
    <ligand>
        <name>[4Fe-4S] cluster</name>
        <dbReference type="ChEBI" id="CHEBI:49883"/>
    </ligand>
</feature>
<feature type="binding site" evidence="2">
    <location>
        <position position="112"/>
    </location>
    <ligand>
        <name>[4Fe-4S] cluster</name>
        <dbReference type="ChEBI" id="CHEBI:49883"/>
    </ligand>
</feature>
<feature type="binding site" evidence="2">
    <location>
        <position position="142"/>
    </location>
    <ligand>
        <name>[4Fe-4S] cluster</name>
        <dbReference type="ChEBI" id="CHEBI:49883"/>
    </ligand>
</feature>
<dbReference type="EC" id="7.1.1.-" evidence="2"/>
<dbReference type="EMBL" id="AJ235271">
    <property type="protein sequence ID" value="CAA14816.1"/>
    <property type="molecule type" value="Genomic_DNA"/>
</dbReference>
<dbReference type="PIR" id="F71692">
    <property type="entry name" value="F71692"/>
</dbReference>
<dbReference type="RefSeq" id="NP_220740.1">
    <property type="nucleotide sequence ID" value="NC_000963.1"/>
</dbReference>
<dbReference type="RefSeq" id="WP_004597491.1">
    <property type="nucleotide sequence ID" value="NC_000963.1"/>
</dbReference>
<dbReference type="SMR" id="Q9ZDH2"/>
<dbReference type="STRING" id="272947.gene:17555436"/>
<dbReference type="EnsemblBacteria" id="CAA14816">
    <property type="protein sequence ID" value="CAA14816"/>
    <property type="gene ID" value="CAA14816"/>
</dbReference>
<dbReference type="KEGG" id="rpr:RP356"/>
<dbReference type="PATRIC" id="fig|272947.5.peg.366"/>
<dbReference type="eggNOG" id="COG0377">
    <property type="taxonomic scope" value="Bacteria"/>
</dbReference>
<dbReference type="HOGENOM" id="CLU_055737_7_3_5"/>
<dbReference type="OrthoDB" id="9786737at2"/>
<dbReference type="Proteomes" id="UP000002480">
    <property type="component" value="Chromosome"/>
</dbReference>
<dbReference type="GO" id="GO:0005886">
    <property type="term" value="C:plasma membrane"/>
    <property type="evidence" value="ECO:0007669"/>
    <property type="project" value="UniProtKB-SubCell"/>
</dbReference>
<dbReference type="GO" id="GO:0045271">
    <property type="term" value="C:respiratory chain complex I"/>
    <property type="evidence" value="ECO:0007669"/>
    <property type="project" value="TreeGrafter"/>
</dbReference>
<dbReference type="GO" id="GO:0051539">
    <property type="term" value="F:4 iron, 4 sulfur cluster binding"/>
    <property type="evidence" value="ECO:0007669"/>
    <property type="project" value="UniProtKB-KW"/>
</dbReference>
<dbReference type="GO" id="GO:0005506">
    <property type="term" value="F:iron ion binding"/>
    <property type="evidence" value="ECO:0007669"/>
    <property type="project" value="UniProtKB-UniRule"/>
</dbReference>
<dbReference type="GO" id="GO:0008137">
    <property type="term" value="F:NADH dehydrogenase (ubiquinone) activity"/>
    <property type="evidence" value="ECO:0007669"/>
    <property type="project" value="InterPro"/>
</dbReference>
<dbReference type="GO" id="GO:0050136">
    <property type="term" value="F:NADH:ubiquinone reductase (non-electrogenic) activity"/>
    <property type="evidence" value="ECO:0007669"/>
    <property type="project" value="UniProtKB-UniRule"/>
</dbReference>
<dbReference type="GO" id="GO:0048038">
    <property type="term" value="F:quinone binding"/>
    <property type="evidence" value="ECO:0007669"/>
    <property type="project" value="UniProtKB-KW"/>
</dbReference>
<dbReference type="GO" id="GO:0009060">
    <property type="term" value="P:aerobic respiration"/>
    <property type="evidence" value="ECO:0007669"/>
    <property type="project" value="TreeGrafter"/>
</dbReference>
<dbReference type="GO" id="GO:0015990">
    <property type="term" value="P:electron transport coupled proton transport"/>
    <property type="evidence" value="ECO:0007669"/>
    <property type="project" value="TreeGrafter"/>
</dbReference>
<dbReference type="FunFam" id="3.40.50.12280:FF:000001">
    <property type="entry name" value="NADH-quinone oxidoreductase subunit B 2"/>
    <property type="match status" value="1"/>
</dbReference>
<dbReference type="Gene3D" id="3.40.50.12280">
    <property type="match status" value="1"/>
</dbReference>
<dbReference type="HAMAP" id="MF_01356">
    <property type="entry name" value="NDH1_NuoB"/>
    <property type="match status" value="1"/>
</dbReference>
<dbReference type="InterPro" id="IPR006137">
    <property type="entry name" value="NADH_UbQ_OxRdtase-like_20kDa"/>
</dbReference>
<dbReference type="InterPro" id="IPR006138">
    <property type="entry name" value="NADH_UQ_OxRdtase_20Kd_su"/>
</dbReference>
<dbReference type="NCBIfam" id="TIGR01957">
    <property type="entry name" value="nuoB_fam"/>
    <property type="match status" value="1"/>
</dbReference>
<dbReference type="NCBIfam" id="NF005012">
    <property type="entry name" value="PRK06411.1"/>
    <property type="match status" value="1"/>
</dbReference>
<dbReference type="PANTHER" id="PTHR11995">
    <property type="entry name" value="NADH DEHYDROGENASE"/>
    <property type="match status" value="1"/>
</dbReference>
<dbReference type="PANTHER" id="PTHR11995:SF14">
    <property type="entry name" value="NADH DEHYDROGENASE [UBIQUINONE] IRON-SULFUR PROTEIN 7, MITOCHONDRIAL"/>
    <property type="match status" value="1"/>
</dbReference>
<dbReference type="Pfam" id="PF01058">
    <property type="entry name" value="Oxidored_q6"/>
    <property type="match status" value="1"/>
</dbReference>
<dbReference type="SUPFAM" id="SSF56770">
    <property type="entry name" value="HydA/Nqo6-like"/>
    <property type="match status" value="1"/>
</dbReference>
<dbReference type="PROSITE" id="PS01150">
    <property type="entry name" value="COMPLEX1_20K"/>
    <property type="match status" value="1"/>
</dbReference>
<proteinExistence type="inferred from homology"/>
<accession>Q9ZDH2</accession>
<sequence length="174" mass="19659">MEHDFYQEDELLNSGLTNRGFLLSKVDEVISWARANSLWPMTFGLACCAVEMMQAAASRYDMDRFGMLFRPSPRQSDLMIVAGTLTNKMAPALRKVYDQMTEPKWVLSMGSCANGGGYYHFSYSVVRGCDRIVPVDVYVPGCPPTAEALIYGLMQLQKKIKRTTGFKYDSRQTH</sequence>
<name>NUOB_RICPR</name>
<comment type="function">
    <text evidence="1">NDH-1 shuttles electrons from NADH, via FMN and iron-sulfur (Fe-S) centers, to quinones in the respiratory chain. Couples the redox reaction to proton translocation (for every two electrons transferred, four hydrogen ions are translocated across the cytoplasmic membrane), and thus conserves the redox energy in a proton gradient (By similarity).</text>
</comment>
<comment type="catalytic activity">
    <reaction evidence="2">
        <text>a quinone + NADH + 5 H(+)(in) = a quinol + NAD(+) + 4 H(+)(out)</text>
        <dbReference type="Rhea" id="RHEA:57888"/>
        <dbReference type="ChEBI" id="CHEBI:15378"/>
        <dbReference type="ChEBI" id="CHEBI:24646"/>
        <dbReference type="ChEBI" id="CHEBI:57540"/>
        <dbReference type="ChEBI" id="CHEBI:57945"/>
        <dbReference type="ChEBI" id="CHEBI:132124"/>
    </reaction>
</comment>
<comment type="cofactor">
    <cofactor evidence="2">
        <name>[4Fe-4S] cluster</name>
        <dbReference type="ChEBI" id="CHEBI:49883"/>
    </cofactor>
    <text evidence="2">Binds 1 [4Fe-4S] cluster.</text>
</comment>
<comment type="subunit">
    <text evidence="2">NDH-1 is composed of 14 different subunits. Subunits NuoB, C, D, E, F, and G constitute the peripheral sector of the complex.</text>
</comment>
<comment type="subcellular location">
    <subcellularLocation>
        <location evidence="2">Cell inner membrane</location>
        <topology evidence="2">Peripheral membrane protein</topology>
        <orientation evidence="2">Cytoplasmic side</orientation>
    </subcellularLocation>
</comment>
<comment type="similarity">
    <text evidence="2">Belongs to the complex I 20 kDa subunit family.</text>
</comment>
<gene>
    <name evidence="2" type="primary">nuoB</name>
    <name type="ordered locus">RP356</name>
</gene>
<protein>
    <recommendedName>
        <fullName evidence="2">NADH-quinone oxidoreductase subunit B</fullName>
        <ecNumber evidence="2">7.1.1.-</ecNumber>
    </recommendedName>
    <alternativeName>
        <fullName evidence="2">NADH dehydrogenase I subunit B</fullName>
    </alternativeName>
    <alternativeName>
        <fullName evidence="2">NDH-1 subunit B</fullName>
    </alternativeName>
</protein>
<reference key="1">
    <citation type="journal article" date="1998" name="Nature">
        <title>The genome sequence of Rickettsia prowazekii and the origin of mitochondria.</title>
        <authorList>
            <person name="Andersson S.G.E."/>
            <person name="Zomorodipour A."/>
            <person name="Andersson J.O."/>
            <person name="Sicheritz-Ponten T."/>
            <person name="Alsmark U.C.M."/>
            <person name="Podowski R.M."/>
            <person name="Naeslund A.K."/>
            <person name="Eriksson A.-S."/>
            <person name="Winkler H.H."/>
            <person name="Kurland C.G."/>
        </authorList>
    </citation>
    <scope>NUCLEOTIDE SEQUENCE [LARGE SCALE GENOMIC DNA]</scope>
    <source>
        <strain>Madrid E</strain>
    </source>
</reference>
<keyword id="KW-0004">4Fe-4S</keyword>
<keyword id="KW-0997">Cell inner membrane</keyword>
<keyword id="KW-1003">Cell membrane</keyword>
<keyword id="KW-0408">Iron</keyword>
<keyword id="KW-0411">Iron-sulfur</keyword>
<keyword id="KW-0472">Membrane</keyword>
<keyword id="KW-0479">Metal-binding</keyword>
<keyword id="KW-0520">NAD</keyword>
<keyword id="KW-0874">Quinone</keyword>
<keyword id="KW-1185">Reference proteome</keyword>
<keyword id="KW-1278">Translocase</keyword>
<keyword id="KW-0813">Transport</keyword>
<keyword id="KW-0830">Ubiquinone</keyword>
<organism>
    <name type="scientific">Rickettsia prowazekii (strain Madrid E)</name>
    <dbReference type="NCBI Taxonomy" id="272947"/>
    <lineage>
        <taxon>Bacteria</taxon>
        <taxon>Pseudomonadati</taxon>
        <taxon>Pseudomonadota</taxon>
        <taxon>Alphaproteobacteria</taxon>
        <taxon>Rickettsiales</taxon>
        <taxon>Rickettsiaceae</taxon>
        <taxon>Rickettsieae</taxon>
        <taxon>Rickettsia</taxon>
        <taxon>typhus group</taxon>
    </lineage>
</organism>
<evidence type="ECO:0000250" key="1"/>
<evidence type="ECO:0000255" key="2">
    <source>
        <dbReference type="HAMAP-Rule" id="MF_01356"/>
    </source>
</evidence>